<organism>
    <name type="scientific">Xanthomonas euvesicatoria pv. vesicatoria (strain 85-10)</name>
    <name type="common">Xanthomonas campestris pv. vesicatoria</name>
    <dbReference type="NCBI Taxonomy" id="316273"/>
    <lineage>
        <taxon>Bacteria</taxon>
        <taxon>Pseudomonadati</taxon>
        <taxon>Pseudomonadota</taxon>
        <taxon>Gammaproteobacteria</taxon>
        <taxon>Lysobacterales</taxon>
        <taxon>Lysobacteraceae</taxon>
        <taxon>Xanthomonas</taxon>
    </lineage>
</organism>
<keyword id="KW-1003">Cell membrane</keyword>
<keyword id="KW-0472">Membrane</keyword>
<keyword id="KW-0812">Transmembrane</keyword>
<keyword id="KW-1133">Transmembrane helix</keyword>
<comment type="subcellular location">
    <subcellularLocation>
        <location evidence="1">Cell membrane</location>
        <topology evidence="1">Multi-pass membrane protein</topology>
    </subcellularLocation>
</comment>
<comment type="similarity">
    <text evidence="1">Belongs to the UPF0391 family.</text>
</comment>
<gene>
    <name type="ordered locus">XCV0245</name>
</gene>
<name>Y245_XANE5</name>
<dbReference type="EMBL" id="AM039952">
    <property type="protein sequence ID" value="CAJ21876.1"/>
    <property type="molecule type" value="Genomic_DNA"/>
</dbReference>
<dbReference type="RefSeq" id="WP_003468167.1">
    <property type="nucleotide sequence ID" value="NZ_CP017190.1"/>
</dbReference>
<dbReference type="KEGG" id="xcv:XCV0245"/>
<dbReference type="eggNOG" id="COG5487">
    <property type="taxonomic scope" value="Bacteria"/>
</dbReference>
<dbReference type="HOGENOM" id="CLU_187346_0_1_6"/>
<dbReference type="Proteomes" id="UP000007069">
    <property type="component" value="Chromosome"/>
</dbReference>
<dbReference type="GO" id="GO:0005886">
    <property type="term" value="C:plasma membrane"/>
    <property type="evidence" value="ECO:0007669"/>
    <property type="project" value="UniProtKB-SubCell"/>
</dbReference>
<dbReference type="HAMAP" id="MF_01361">
    <property type="entry name" value="UPF0391"/>
    <property type="match status" value="1"/>
</dbReference>
<dbReference type="InterPro" id="IPR009760">
    <property type="entry name" value="DUF1328"/>
</dbReference>
<dbReference type="NCBIfam" id="NF010226">
    <property type="entry name" value="PRK13682.1-1"/>
    <property type="match status" value="1"/>
</dbReference>
<dbReference type="NCBIfam" id="NF010229">
    <property type="entry name" value="PRK13682.1-4"/>
    <property type="match status" value="1"/>
</dbReference>
<dbReference type="Pfam" id="PF07043">
    <property type="entry name" value="DUF1328"/>
    <property type="match status" value="1"/>
</dbReference>
<dbReference type="PIRSF" id="PIRSF036466">
    <property type="entry name" value="UCP036466"/>
    <property type="match status" value="1"/>
</dbReference>
<protein>
    <recommendedName>
        <fullName evidence="1">UPF0391 membrane protein XCV0245</fullName>
    </recommendedName>
</protein>
<sequence length="52" mass="5640">MLHYAIIFFVIAIIAAVLGFSGIAGAATNIAWILFVVFLILAVISMFRRGKV</sequence>
<proteinExistence type="inferred from homology"/>
<feature type="chain" id="PRO_0000256802" description="UPF0391 membrane protein XCV0245">
    <location>
        <begin position="1"/>
        <end position="52"/>
    </location>
</feature>
<feature type="transmembrane region" description="Helical" evidence="1">
    <location>
        <begin position="5"/>
        <end position="25"/>
    </location>
</feature>
<feature type="transmembrane region" description="Helical" evidence="1">
    <location>
        <begin position="27"/>
        <end position="47"/>
    </location>
</feature>
<accession>Q3BZ37</accession>
<reference key="1">
    <citation type="journal article" date="2005" name="J. Bacteriol.">
        <title>Insights into genome plasticity and pathogenicity of the plant pathogenic Bacterium Xanthomonas campestris pv. vesicatoria revealed by the complete genome sequence.</title>
        <authorList>
            <person name="Thieme F."/>
            <person name="Koebnik R."/>
            <person name="Bekel T."/>
            <person name="Berger C."/>
            <person name="Boch J."/>
            <person name="Buettner D."/>
            <person name="Caldana C."/>
            <person name="Gaigalat L."/>
            <person name="Goesmann A."/>
            <person name="Kay S."/>
            <person name="Kirchner O."/>
            <person name="Lanz C."/>
            <person name="Linke B."/>
            <person name="McHardy A.C."/>
            <person name="Meyer F."/>
            <person name="Mittenhuber G."/>
            <person name="Nies D.H."/>
            <person name="Niesbach-Kloesgen U."/>
            <person name="Patschkowski T."/>
            <person name="Rueckert C."/>
            <person name="Rupp O."/>
            <person name="Schneiker S."/>
            <person name="Schuster S.C."/>
            <person name="Vorhoelter F.J."/>
            <person name="Weber E."/>
            <person name="Puehler A."/>
            <person name="Bonas U."/>
            <person name="Bartels D."/>
            <person name="Kaiser O."/>
        </authorList>
    </citation>
    <scope>NUCLEOTIDE SEQUENCE [LARGE SCALE GENOMIC DNA]</scope>
    <source>
        <strain>85-10</strain>
    </source>
</reference>
<evidence type="ECO:0000255" key="1">
    <source>
        <dbReference type="HAMAP-Rule" id="MF_01361"/>
    </source>
</evidence>